<reference key="1">
    <citation type="journal article" date="2003" name="FEBS Lett.">
        <title>Sodium channel modulating activity in a delta-conotoxin from an Indian marine snail.</title>
        <authorList>
            <person name="Sudarslal S."/>
            <person name="Majumdar S."/>
            <person name="Ramasamy P."/>
            <person name="Dhawan R."/>
            <person name="Pal P.P."/>
            <person name="Ramaswami M."/>
            <person name="Lala A.K."/>
            <person name="Sikdar S.K."/>
            <person name="Sarma S.P."/>
            <person name="Krishnan K.S."/>
            <person name="Balaram P."/>
        </authorList>
    </citation>
    <scope>PROTEIN SEQUENCE</scope>
    <scope>FUNCTION</scope>
    <scope>AMIDATION AT GLU-26</scope>
    <scope>MASS SPECTROMETRY</scope>
    <scope>SUBCELLULAR LOCATION</scope>
    <source>
        <tissue>Venom</tissue>
    </source>
</reference>
<reference key="2">
    <citation type="journal article" date="2005" name="Chem. Biodivers.">
        <title>Solution structure of delta-Am2766: a highly hydrophobic delta-conotoxin from Conus amadis that inhibits inactivation of neuronal voltage-gated sodium channels.</title>
        <authorList>
            <person name="Sarma S.P."/>
            <person name="Kumar G.S."/>
            <person name="Sudarslal S."/>
            <person name="Iengar P."/>
            <person name="Ramasamy P."/>
            <person name="Sikdar S.K."/>
            <person name="Krishnan K.S."/>
            <person name="Balaram P."/>
        </authorList>
    </citation>
    <scope>STRUCTURE BY NMR</scope>
    <scope>DISULFIDE BONDS</scope>
</reference>
<proteinExistence type="evidence at protein level"/>
<feature type="peptide" id="PRO_0000044474" description="Delta-conotoxin Am2766" evidence="1">
    <location>
        <begin position="1"/>
        <end position="26"/>
    </location>
</feature>
<feature type="modified residue" description="Glutamic acid 1-amide" evidence="1">
    <location>
        <position position="26"/>
    </location>
</feature>
<feature type="disulfide bond" evidence="2">
    <location>
        <begin position="1"/>
        <end position="16"/>
    </location>
</feature>
<feature type="disulfide bond" evidence="2">
    <location>
        <begin position="8"/>
        <end position="20"/>
    </location>
</feature>
<feature type="disulfide bond" evidence="2">
    <location>
        <begin position="15"/>
        <end position="24"/>
    </location>
</feature>
<feature type="strand" evidence="8">
    <location>
        <begin position="10"/>
        <end position="12"/>
    </location>
</feature>
<feature type="strand" evidence="8">
    <location>
        <begin position="21"/>
        <end position="23"/>
    </location>
</feature>
<keyword id="KW-0002">3D-structure</keyword>
<keyword id="KW-0027">Amidation</keyword>
<keyword id="KW-0903">Direct protein sequencing</keyword>
<keyword id="KW-1015">Disulfide bond</keyword>
<keyword id="KW-0872">Ion channel impairing toxin</keyword>
<keyword id="KW-0960">Knottin</keyword>
<keyword id="KW-0528">Neurotoxin</keyword>
<keyword id="KW-0964">Secreted</keyword>
<keyword id="KW-0800">Toxin</keyword>
<keyword id="KW-0738">Voltage-gated sodium channel impairing toxin</keyword>
<evidence type="ECO:0000269" key="1">
    <source>
    </source>
</evidence>
<evidence type="ECO:0000269" key="2">
    <source>
    </source>
</evidence>
<evidence type="ECO:0000303" key="3">
    <source>
    </source>
</evidence>
<evidence type="ECO:0000303" key="4">
    <source>
    </source>
</evidence>
<evidence type="ECO:0000305" key="5"/>
<evidence type="ECO:0000305" key="6">
    <source>
    </source>
</evidence>
<evidence type="ECO:0000305" key="7">
    <source>
    </source>
</evidence>
<evidence type="ECO:0007829" key="8">
    <source>
        <dbReference type="PDB" id="1YZ2"/>
    </source>
</evidence>
<accession>P60179</accession>
<organism>
    <name type="scientific">Conus amadis</name>
    <name type="common">Amadis cone</name>
    <dbReference type="NCBI Taxonomy" id="198732"/>
    <lineage>
        <taxon>Eukaryota</taxon>
        <taxon>Metazoa</taxon>
        <taxon>Spiralia</taxon>
        <taxon>Lophotrochozoa</taxon>
        <taxon>Mollusca</taxon>
        <taxon>Gastropoda</taxon>
        <taxon>Caenogastropoda</taxon>
        <taxon>Neogastropoda</taxon>
        <taxon>Conoidea</taxon>
        <taxon>Conidae</taxon>
        <taxon>Conus</taxon>
        <taxon>Leptoconus</taxon>
    </lineage>
</organism>
<sequence length="26" mass="2773">CKQAGESCDIFSQNCCVGTCAFICIE</sequence>
<comment type="function">
    <text evidence="1">Delta-conotoxins bind to site 6 of voltage-gated sodium channels (Nav) and inhibit the inactivation process.</text>
</comment>
<comment type="subcellular location">
    <subcellularLocation>
        <location evidence="1">Secreted</location>
    </subcellularLocation>
</comment>
<comment type="tissue specificity">
    <text evidence="6">Expressed by the venom duct.</text>
</comment>
<comment type="domain">
    <text evidence="5">The presence of a 'disulfide through disulfide knot' structurally defines this protein as a knottin.</text>
</comment>
<comment type="domain">
    <text evidence="5">The cysteine framework is VI/VII (C-C-CC-C-C).</text>
</comment>
<comment type="mass spectrometry" mass="2766.0" method="Electrospray" evidence="1"/>
<comment type="mass spectrometry" mass="2766.0" method="MALDI" evidence="1"/>
<comment type="similarity">
    <text evidence="5">Belongs to the conotoxin O1 superfamily.</text>
</comment>
<dbReference type="PDB" id="1YZ2">
    <property type="method" value="NMR"/>
    <property type="chains" value="A=1-26"/>
</dbReference>
<dbReference type="PDBsum" id="1YZ2"/>
<dbReference type="SMR" id="P60179"/>
<dbReference type="ConoServer" id="1630">
    <property type="toxin name" value="Am2766"/>
</dbReference>
<dbReference type="EvolutionaryTrace" id="P60179"/>
<dbReference type="GO" id="GO:0005576">
    <property type="term" value="C:extracellular region"/>
    <property type="evidence" value="ECO:0007669"/>
    <property type="project" value="UniProtKB-SubCell"/>
</dbReference>
<dbReference type="GO" id="GO:0019871">
    <property type="term" value="F:sodium channel inhibitor activity"/>
    <property type="evidence" value="ECO:0007669"/>
    <property type="project" value="InterPro"/>
</dbReference>
<dbReference type="GO" id="GO:0090729">
    <property type="term" value="F:toxin activity"/>
    <property type="evidence" value="ECO:0007669"/>
    <property type="project" value="UniProtKB-KW"/>
</dbReference>
<dbReference type="InterPro" id="IPR012322">
    <property type="entry name" value="Conotoxin_d-typ_CS"/>
</dbReference>
<dbReference type="SUPFAM" id="SSF57059">
    <property type="entry name" value="omega toxin-like"/>
    <property type="match status" value="1"/>
</dbReference>
<dbReference type="PROSITE" id="PS60005">
    <property type="entry name" value="DELTA_CONOTOXIN"/>
    <property type="match status" value="1"/>
</dbReference>
<protein>
    <recommendedName>
        <fullName evidence="7">Delta-conotoxin Am2766</fullName>
        <shortName evidence="3">Am 2766</shortName>
        <shortName evidence="4">Delta-Am2766</shortName>
    </recommendedName>
</protein>
<name>O166_CONAA</name>